<dbReference type="EC" id="2.7.4.3" evidence="1"/>
<dbReference type="PIR" id="S45634">
    <property type="entry name" value="S45634"/>
</dbReference>
<dbReference type="PDB" id="1ZAK">
    <property type="method" value="X-ray"/>
    <property type="resolution" value="3.50 A"/>
    <property type="chains" value="A/B=1-222"/>
</dbReference>
<dbReference type="PDBsum" id="1ZAK"/>
<dbReference type="SMR" id="P43188"/>
<dbReference type="FunCoup" id="P43188">
    <property type="interactions" value="1391"/>
</dbReference>
<dbReference type="STRING" id="4577.P43188"/>
<dbReference type="PaxDb" id="4577-GRMZM2G178192_P03"/>
<dbReference type="MaizeGDB" id="13836"/>
<dbReference type="eggNOG" id="KOG3078">
    <property type="taxonomic scope" value="Eukaryota"/>
</dbReference>
<dbReference type="InParanoid" id="P43188"/>
<dbReference type="EvolutionaryTrace" id="P43188"/>
<dbReference type="Proteomes" id="UP000007305">
    <property type="component" value="Unplaced"/>
</dbReference>
<dbReference type="ExpressionAtlas" id="P43188">
    <property type="expression patterns" value="baseline and differential"/>
</dbReference>
<dbReference type="GO" id="GO:0009507">
    <property type="term" value="C:chloroplast"/>
    <property type="evidence" value="ECO:0007669"/>
    <property type="project" value="UniProtKB-SubCell"/>
</dbReference>
<dbReference type="GO" id="GO:0005737">
    <property type="term" value="C:cytoplasm"/>
    <property type="evidence" value="ECO:0000318"/>
    <property type="project" value="GO_Central"/>
</dbReference>
<dbReference type="GO" id="GO:0004017">
    <property type="term" value="F:adenylate kinase activity"/>
    <property type="evidence" value="ECO:0000318"/>
    <property type="project" value="GO_Central"/>
</dbReference>
<dbReference type="GO" id="GO:0005524">
    <property type="term" value="F:ATP binding"/>
    <property type="evidence" value="ECO:0007669"/>
    <property type="project" value="UniProtKB-KW"/>
</dbReference>
<dbReference type="CDD" id="cd01428">
    <property type="entry name" value="ADK"/>
    <property type="match status" value="1"/>
</dbReference>
<dbReference type="FunFam" id="3.40.50.300:FF:001694">
    <property type="entry name" value="Adenylate kinase, chloroplastic"/>
    <property type="match status" value="1"/>
</dbReference>
<dbReference type="Gene3D" id="3.40.50.300">
    <property type="entry name" value="P-loop containing nucleotide triphosphate hydrolases"/>
    <property type="match status" value="1"/>
</dbReference>
<dbReference type="HAMAP" id="MF_00235">
    <property type="entry name" value="Adenylate_kinase_Adk"/>
    <property type="match status" value="1"/>
</dbReference>
<dbReference type="InterPro" id="IPR006259">
    <property type="entry name" value="Adenyl_kin_sub"/>
</dbReference>
<dbReference type="InterPro" id="IPR000850">
    <property type="entry name" value="Adenylat/UMP-CMP_kin"/>
</dbReference>
<dbReference type="InterPro" id="IPR033690">
    <property type="entry name" value="Adenylat_kinase_CS"/>
</dbReference>
<dbReference type="InterPro" id="IPR027417">
    <property type="entry name" value="P-loop_NTPase"/>
</dbReference>
<dbReference type="NCBIfam" id="TIGR01351">
    <property type="entry name" value="adk"/>
    <property type="match status" value="1"/>
</dbReference>
<dbReference type="PANTHER" id="PTHR23359">
    <property type="entry name" value="NUCLEOTIDE KINASE"/>
    <property type="match status" value="1"/>
</dbReference>
<dbReference type="Pfam" id="PF00406">
    <property type="entry name" value="ADK"/>
    <property type="match status" value="1"/>
</dbReference>
<dbReference type="PRINTS" id="PR00094">
    <property type="entry name" value="ADENYLTKNASE"/>
</dbReference>
<dbReference type="SUPFAM" id="SSF52540">
    <property type="entry name" value="P-loop containing nucleoside triphosphate hydrolases"/>
    <property type="match status" value="1"/>
</dbReference>
<dbReference type="PROSITE" id="PS00113">
    <property type="entry name" value="ADENYLATE_KINASE"/>
    <property type="match status" value="1"/>
</dbReference>
<organism>
    <name type="scientific">Zea mays</name>
    <name type="common">Maize</name>
    <dbReference type="NCBI Taxonomy" id="4577"/>
    <lineage>
        <taxon>Eukaryota</taxon>
        <taxon>Viridiplantae</taxon>
        <taxon>Streptophyta</taxon>
        <taxon>Embryophyta</taxon>
        <taxon>Tracheophyta</taxon>
        <taxon>Spermatophyta</taxon>
        <taxon>Magnoliopsida</taxon>
        <taxon>Liliopsida</taxon>
        <taxon>Poales</taxon>
        <taxon>Poaceae</taxon>
        <taxon>PACMAD clade</taxon>
        <taxon>Panicoideae</taxon>
        <taxon>Andropogonodae</taxon>
        <taxon>Andropogoneae</taxon>
        <taxon>Tripsacinae</taxon>
        <taxon>Zea</taxon>
    </lineage>
</organism>
<evidence type="ECO:0000269" key="1">
    <source>
    </source>
</evidence>
<evidence type="ECO:0000269" key="2">
    <source>
    </source>
</evidence>
<evidence type="ECO:0000269" key="3">
    <source>
    </source>
</evidence>
<evidence type="ECO:0000269" key="4">
    <source>
    </source>
</evidence>
<evidence type="ECO:0000305" key="5"/>
<evidence type="ECO:0007829" key="6">
    <source>
        <dbReference type="PDB" id="1ZAK"/>
    </source>
</evidence>
<protein>
    <recommendedName>
        <fullName>Adenylate kinase, chloroplastic</fullName>
        <shortName>AK</shortName>
        <ecNumber evidence="1">2.7.4.3</ecNumber>
    </recommendedName>
    <alternativeName>
        <fullName>ATP-AMP transphosphorylase</fullName>
    </alternativeName>
    <alternativeName>
        <fullName>ATP:AMP phosphotransferase</fullName>
    </alternativeName>
    <alternativeName>
        <fullName>Adenylate monophosphate kinase</fullName>
    </alternativeName>
</protein>
<proteinExistence type="evidence at protein level"/>
<keyword id="KW-0002">3D-structure</keyword>
<keyword id="KW-0067">ATP-binding</keyword>
<keyword id="KW-0150">Chloroplast</keyword>
<keyword id="KW-0903">Direct protein sequencing</keyword>
<keyword id="KW-0418">Kinase</keyword>
<keyword id="KW-0547">Nucleotide-binding</keyword>
<keyword id="KW-0934">Plastid</keyword>
<keyword id="KW-1185">Reference proteome</keyword>
<keyword id="KW-0808">Transferase</keyword>
<comment type="function">
    <text evidence="1">Catalyzes the reversible transfer of the terminal phosphate group between ATP and AMP. Plays an important role in cellular energy homeostasis and in adenine nucleotide metabolism. The maize enzyme also works with CMP, albeit with 10% of the activity with AMP.</text>
</comment>
<comment type="catalytic activity">
    <reaction evidence="1">
        <text>AMP + ATP = 2 ADP</text>
        <dbReference type="Rhea" id="RHEA:12973"/>
        <dbReference type="ChEBI" id="CHEBI:30616"/>
        <dbReference type="ChEBI" id="CHEBI:456215"/>
        <dbReference type="ChEBI" id="CHEBI:456216"/>
        <dbReference type="EC" id="2.7.4.3"/>
    </reaction>
</comment>
<comment type="subunit">
    <text evidence="1">Monomer.</text>
</comment>
<comment type="subcellular location">
    <subcellularLocation>
        <location evidence="2">Plastid</location>
        <location evidence="2">Chloroplast</location>
    </subcellularLocation>
</comment>
<comment type="mass spectrometry"/>
<comment type="similarity">
    <text evidence="5">Belongs to the adenylate kinase family.</text>
</comment>
<sequence>ALADPLKVMISGAPASGKGTQCELIKTKYQLAHISAGDLLRAEIAAGSENGKRAKEFMEKGQLVPDEIVVNMVKERLRQPDAQENGWLLDGYPRSYSQAMALETLEIRPDTFILLDVPDELLVERVVGRRLDPVTGKIYHLKYSPPENEEIASRLTQRFDDTEEKVKLRLETYYQNIESLLSTYENIIVKVQGDATVDAVFAKIDELLGSILEKKNEMVSST</sequence>
<accession>P43188</accession>
<reference key="1">
    <citation type="journal article" date="1994" name="Eur. J. Biochem.">
        <title>Primary structure of maize chloroplast adenylate kinase.</title>
        <authorList>
            <person name="Schiltz E."/>
            <person name="Burger S."/>
            <person name="Grafmueller R."/>
            <person name="Deppert W.R."/>
            <person name="Haehnel W."/>
            <person name="Wagner E."/>
        </authorList>
    </citation>
    <scope>PROTEIN SEQUENCE</scope>
    <scope>MASS SPECTROMETRY</scope>
    <source>
        <tissue>Leaf</tissue>
    </source>
</reference>
<reference key="2">
    <citation type="journal article" date="1969" name="Biochem. J.">
        <title>Distribution of enzymes in mesophyll and parenchyma-sheath chloroplasts of maize leaves in relation to the C4-dicarboxylic acid pathway of photosynthesis.</title>
        <authorList>
            <person name="Slack C.R."/>
            <person name="Hatch M.D."/>
            <person name="Goodchild D.J."/>
        </authorList>
    </citation>
    <scope>SUBCELLULAR LOCATION</scope>
</reference>
<reference key="3">
    <citation type="journal article" date="1986" name="Plant Physiol.">
        <title>Maize leaf adenylate kinase: purification and partial characterization.</title>
        <authorList>
            <person name="Kleczkowski L.A."/>
            <person name="Randall D.D."/>
        </authorList>
    </citation>
    <scope>FUNCTION</scope>
    <scope>CATALYTIC ACTIVITY</scope>
    <scope>SUBSTRATE SPECIFICITY</scope>
    <scope>SUBUNIT</scope>
</reference>
<reference key="4">
    <citation type="journal article" date="1997" name="Eur. J. Biochem.">
        <title>Structure, catalysis and supramolecular assembly of adenylate kinase from maize.</title>
        <authorList>
            <person name="Wild K."/>
            <person name="Grafmueller R."/>
            <person name="Wagner E."/>
            <person name="Schulz G.E."/>
        </authorList>
    </citation>
    <scope>X-RAY CRYSTALLOGRAPHY (3.5 ANGSTROMS) IN COMPLEX WITH BI-SUBSTRATE ANALOG AP5A</scope>
</reference>
<name>KADC_MAIZE</name>
<feature type="chain" id="PRO_0000158939" description="Adenylate kinase, chloroplastic">
    <location>
        <begin position="1"/>
        <end position="222"/>
    </location>
</feature>
<feature type="region of interest" description="NMP" evidence="4">
    <location>
        <begin position="35"/>
        <end position="64"/>
    </location>
</feature>
<feature type="region of interest" description="LID" evidence="4">
    <location>
        <begin position="128"/>
        <end position="161"/>
    </location>
</feature>
<feature type="binding site" evidence="4">
    <location>
        <begin position="15"/>
        <end position="20"/>
    </location>
    <ligand>
        <name>ATP</name>
        <dbReference type="ChEBI" id="CHEBI:30616"/>
    </ligand>
</feature>
<feature type="binding site" evidence="4">
    <location>
        <position position="41"/>
    </location>
    <ligand>
        <name>AMP</name>
        <dbReference type="ChEBI" id="CHEBI:456215"/>
    </ligand>
</feature>
<feature type="binding site" evidence="4">
    <location>
        <begin position="62"/>
        <end position="64"/>
    </location>
    <ligand>
        <name>AMP</name>
        <dbReference type="ChEBI" id="CHEBI:456215"/>
    </ligand>
</feature>
<feature type="binding site" evidence="4">
    <location>
        <begin position="91"/>
        <end position="94"/>
    </location>
    <ligand>
        <name>AMP</name>
        <dbReference type="ChEBI" id="CHEBI:456215"/>
    </ligand>
</feature>
<feature type="binding site" evidence="4">
    <location>
        <position position="98"/>
    </location>
    <ligand>
        <name>AMP</name>
        <dbReference type="ChEBI" id="CHEBI:456215"/>
    </ligand>
</feature>
<feature type="binding site" evidence="4">
    <location>
        <position position="129"/>
    </location>
    <ligand>
        <name>ATP</name>
        <dbReference type="ChEBI" id="CHEBI:30616"/>
    </ligand>
</feature>
<feature type="binding site" evidence="4">
    <location>
        <position position="158"/>
    </location>
    <ligand>
        <name>AMP</name>
        <dbReference type="ChEBI" id="CHEBI:456215"/>
    </ligand>
</feature>
<feature type="binding site" evidence="4">
    <location>
        <position position="195"/>
    </location>
    <ligand>
        <name>ATP</name>
        <dbReference type="ChEBI" id="CHEBI:30616"/>
    </ligand>
</feature>
<feature type="strand" evidence="6">
    <location>
        <begin position="8"/>
        <end position="13"/>
    </location>
</feature>
<feature type="helix" evidence="6">
    <location>
        <begin position="18"/>
        <end position="29"/>
    </location>
</feature>
<feature type="helix" evidence="6">
    <location>
        <begin position="36"/>
        <end position="46"/>
    </location>
</feature>
<feature type="helix" evidence="6">
    <location>
        <begin position="49"/>
        <end position="59"/>
    </location>
</feature>
<feature type="helix" evidence="6">
    <location>
        <begin position="66"/>
        <end position="78"/>
    </location>
</feature>
<feature type="helix" evidence="6">
    <location>
        <begin position="80"/>
        <end position="84"/>
    </location>
</feature>
<feature type="strand" evidence="6">
    <location>
        <begin position="87"/>
        <end position="91"/>
    </location>
</feature>
<feature type="helix" evidence="6">
    <location>
        <begin position="96"/>
        <end position="103"/>
    </location>
</feature>
<feature type="turn" evidence="6">
    <location>
        <begin position="104"/>
        <end position="106"/>
    </location>
</feature>
<feature type="strand" evidence="6">
    <location>
        <begin position="110"/>
        <end position="116"/>
    </location>
</feature>
<feature type="helix" evidence="6">
    <location>
        <begin position="119"/>
        <end position="126"/>
    </location>
</feature>
<feature type="strand" evidence="6">
    <location>
        <begin position="129"/>
        <end position="131"/>
    </location>
</feature>
<feature type="turn" evidence="6">
    <location>
        <begin position="133"/>
        <end position="135"/>
    </location>
</feature>
<feature type="strand" evidence="6">
    <location>
        <begin position="138"/>
        <end position="144"/>
    </location>
</feature>
<feature type="helix" evidence="6">
    <location>
        <begin position="150"/>
        <end position="154"/>
    </location>
</feature>
<feature type="helix" evidence="6">
    <location>
        <begin position="165"/>
        <end position="182"/>
    </location>
</feature>
<feature type="strand" evidence="6">
    <location>
        <begin position="188"/>
        <end position="192"/>
    </location>
</feature>
<feature type="helix" evidence="6">
    <location>
        <begin position="197"/>
        <end position="219"/>
    </location>
</feature>
<gene>
    <name type="primary">ADK1</name>
</gene>